<protein>
    <recommendedName>
        <fullName evidence="1">4-hydroxythreonine-4-phosphate dehydrogenase</fullName>
        <ecNumber evidence="1">1.1.1.262</ecNumber>
    </recommendedName>
    <alternativeName>
        <fullName evidence="1">4-(phosphohydroxy)-L-threonine dehydrogenase</fullName>
    </alternativeName>
</protein>
<proteinExistence type="inferred from homology"/>
<dbReference type="EC" id="1.1.1.262" evidence="1"/>
<dbReference type="EMBL" id="BA000019">
    <property type="protein sequence ID" value="BAB76454.1"/>
    <property type="molecule type" value="Genomic_DNA"/>
</dbReference>
<dbReference type="PIR" id="AC2400">
    <property type="entry name" value="AC2400"/>
</dbReference>
<dbReference type="RefSeq" id="WP_010998886.1">
    <property type="nucleotide sequence ID" value="NZ_RSCN01000020.1"/>
</dbReference>
<dbReference type="SMR" id="P58711"/>
<dbReference type="STRING" id="103690.gene:10496808"/>
<dbReference type="KEGG" id="ana:alr4755"/>
<dbReference type="eggNOG" id="COG1995">
    <property type="taxonomic scope" value="Bacteria"/>
</dbReference>
<dbReference type="OrthoDB" id="9801783at2"/>
<dbReference type="UniPathway" id="UPA00244">
    <property type="reaction ID" value="UER00312"/>
</dbReference>
<dbReference type="Proteomes" id="UP000002483">
    <property type="component" value="Chromosome"/>
</dbReference>
<dbReference type="GO" id="GO:0005737">
    <property type="term" value="C:cytoplasm"/>
    <property type="evidence" value="ECO:0007669"/>
    <property type="project" value="UniProtKB-SubCell"/>
</dbReference>
<dbReference type="GO" id="GO:0050570">
    <property type="term" value="F:4-hydroxythreonine-4-phosphate dehydrogenase activity"/>
    <property type="evidence" value="ECO:0007669"/>
    <property type="project" value="UniProtKB-UniRule"/>
</dbReference>
<dbReference type="GO" id="GO:0046872">
    <property type="term" value="F:metal ion binding"/>
    <property type="evidence" value="ECO:0007669"/>
    <property type="project" value="UniProtKB-UniRule"/>
</dbReference>
<dbReference type="GO" id="GO:0051287">
    <property type="term" value="F:NAD binding"/>
    <property type="evidence" value="ECO:0007669"/>
    <property type="project" value="InterPro"/>
</dbReference>
<dbReference type="GO" id="GO:0042823">
    <property type="term" value="P:pyridoxal phosphate biosynthetic process"/>
    <property type="evidence" value="ECO:0007669"/>
    <property type="project" value="UniProtKB-UniRule"/>
</dbReference>
<dbReference type="GO" id="GO:0008615">
    <property type="term" value="P:pyridoxine biosynthetic process"/>
    <property type="evidence" value="ECO:0007669"/>
    <property type="project" value="UniProtKB-UniRule"/>
</dbReference>
<dbReference type="Gene3D" id="3.40.718.10">
    <property type="entry name" value="Isopropylmalate Dehydrogenase"/>
    <property type="match status" value="1"/>
</dbReference>
<dbReference type="HAMAP" id="MF_00536">
    <property type="entry name" value="PdxA"/>
    <property type="match status" value="1"/>
</dbReference>
<dbReference type="InterPro" id="IPR037510">
    <property type="entry name" value="PdxA"/>
</dbReference>
<dbReference type="InterPro" id="IPR005255">
    <property type="entry name" value="PdxA_fam"/>
</dbReference>
<dbReference type="NCBIfam" id="TIGR00557">
    <property type="entry name" value="pdxA"/>
    <property type="match status" value="1"/>
</dbReference>
<dbReference type="NCBIfam" id="NF002744">
    <property type="entry name" value="PRK02746.1"/>
    <property type="match status" value="1"/>
</dbReference>
<dbReference type="PANTHER" id="PTHR30004">
    <property type="entry name" value="4-HYDROXYTHREONINE-4-PHOSPHATE DEHYDROGENASE"/>
    <property type="match status" value="1"/>
</dbReference>
<dbReference type="PANTHER" id="PTHR30004:SF6">
    <property type="entry name" value="D-THREONATE 4-PHOSPHATE DEHYDROGENASE"/>
    <property type="match status" value="1"/>
</dbReference>
<dbReference type="Pfam" id="PF04166">
    <property type="entry name" value="PdxA"/>
    <property type="match status" value="1"/>
</dbReference>
<dbReference type="SUPFAM" id="SSF53659">
    <property type="entry name" value="Isocitrate/Isopropylmalate dehydrogenase-like"/>
    <property type="match status" value="1"/>
</dbReference>
<feature type="chain" id="PRO_0000188795" description="4-hydroxythreonine-4-phosphate dehydrogenase">
    <location>
        <begin position="1"/>
        <end position="362"/>
    </location>
</feature>
<feature type="binding site" evidence="1">
    <location>
        <position position="149"/>
    </location>
    <ligand>
        <name>substrate</name>
    </ligand>
</feature>
<feature type="binding site" evidence="1">
    <location>
        <position position="184"/>
    </location>
    <ligand>
        <name>a divalent metal cation</name>
        <dbReference type="ChEBI" id="CHEBI:60240"/>
        <note>ligand shared between dimeric partners</note>
    </ligand>
</feature>
<feature type="binding site" evidence="1">
    <location>
        <position position="229"/>
    </location>
    <ligand>
        <name>a divalent metal cation</name>
        <dbReference type="ChEBI" id="CHEBI:60240"/>
        <note>ligand shared between dimeric partners</note>
    </ligand>
</feature>
<feature type="binding site" evidence="1">
    <location>
        <position position="295"/>
    </location>
    <ligand>
        <name>a divalent metal cation</name>
        <dbReference type="ChEBI" id="CHEBI:60240"/>
        <note>ligand shared between dimeric partners</note>
    </ligand>
</feature>
<feature type="binding site" evidence="1">
    <location>
        <position position="303"/>
    </location>
    <ligand>
        <name>substrate</name>
    </ligand>
</feature>
<feature type="binding site" evidence="1">
    <location>
        <position position="312"/>
    </location>
    <ligand>
        <name>substrate</name>
    </ligand>
</feature>
<feature type="binding site" evidence="1">
    <location>
        <position position="321"/>
    </location>
    <ligand>
        <name>substrate</name>
    </ligand>
</feature>
<keyword id="KW-0963">Cytoplasm</keyword>
<keyword id="KW-0479">Metal-binding</keyword>
<keyword id="KW-0520">NAD</keyword>
<keyword id="KW-0521">NADP</keyword>
<keyword id="KW-0560">Oxidoreductase</keyword>
<keyword id="KW-0664">Pyridoxine biosynthesis</keyword>
<keyword id="KW-1185">Reference proteome</keyword>
<name>PDXA_NOSS1</name>
<comment type="function">
    <text evidence="1">Catalyzes the NAD(P)-dependent oxidation of 4-(phosphooxy)-L-threonine (HTP) into 2-amino-3-oxo-4-(phosphooxy)butyric acid which spontaneously decarboxylates to form 3-amino-2-oxopropyl phosphate (AHAP).</text>
</comment>
<comment type="catalytic activity">
    <reaction evidence="1">
        <text>4-(phosphooxy)-L-threonine + NAD(+) = 3-amino-2-oxopropyl phosphate + CO2 + NADH</text>
        <dbReference type="Rhea" id="RHEA:32275"/>
        <dbReference type="ChEBI" id="CHEBI:16526"/>
        <dbReference type="ChEBI" id="CHEBI:57279"/>
        <dbReference type="ChEBI" id="CHEBI:57540"/>
        <dbReference type="ChEBI" id="CHEBI:57945"/>
        <dbReference type="ChEBI" id="CHEBI:58452"/>
        <dbReference type="EC" id="1.1.1.262"/>
    </reaction>
</comment>
<comment type="cofactor">
    <cofactor evidence="1">
        <name>a divalent metal cation</name>
        <dbReference type="ChEBI" id="CHEBI:60240"/>
    </cofactor>
    <text evidence="1">Binds 1 divalent metal cation per subunit.</text>
</comment>
<comment type="pathway">
    <text evidence="1">Cofactor biosynthesis; pyridoxine 5'-phosphate biosynthesis; pyridoxine 5'-phosphate from D-erythrose 4-phosphate: step 4/5.</text>
</comment>
<comment type="subunit">
    <text evidence="1">Homodimer.</text>
</comment>
<comment type="subcellular location">
    <subcellularLocation>
        <location evidence="1">Cytoplasm</location>
    </subcellularLocation>
</comment>
<comment type="miscellaneous">
    <text evidence="1">The active site is located at the dimer interface.</text>
</comment>
<comment type="similarity">
    <text evidence="1">Belongs to the PdxA family.</text>
</comment>
<organism>
    <name type="scientific">Nostoc sp. (strain PCC 7120 / SAG 25.82 / UTEX 2576)</name>
    <dbReference type="NCBI Taxonomy" id="103690"/>
    <lineage>
        <taxon>Bacteria</taxon>
        <taxon>Bacillati</taxon>
        <taxon>Cyanobacteriota</taxon>
        <taxon>Cyanophyceae</taxon>
        <taxon>Nostocales</taxon>
        <taxon>Nostocaceae</taxon>
        <taxon>Nostoc</taxon>
    </lineage>
</organism>
<evidence type="ECO:0000255" key="1">
    <source>
        <dbReference type="HAMAP-Rule" id="MF_00536"/>
    </source>
</evidence>
<gene>
    <name evidence="1" type="primary">pdxA</name>
    <name type="ordered locus">alr4755</name>
</gene>
<accession>P58711</accession>
<reference key="1">
    <citation type="journal article" date="2001" name="DNA Res.">
        <title>Complete genomic sequence of the filamentous nitrogen-fixing cyanobacterium Anabaena sp. strain PCC 7120.</title>
        <authorList>
            <person name="Kaneko T."/>
            <person name="Nakamura Y."/>
            <person name="Wolk C.P."/>
            <person name="Kuritz T."/>
            <person name="Sasamoto S."/>
            <person name="Watanabe A."/>
            <person name="Iriguchi M."/>
            <person name="Ishikawa A."/>
            <person name="Kawashima K."/>
            <person name="Kimura T."/>
            <person name="Kishida Y."/>
            <person name="Kohara M."/>
            <person name="Matsumoto M."/>
            <person name="Matsuno A."/>
            <person name="Muraki A."/>
            <person name="Nakazaki N."/>
            <person name="Shimpo S."/>
            <person name="Sugimoto M."/>
            <person name="Takazawa M."/>
            <person name="Yamada M."/>
            <person name="Yasuda M."/>
            <person name="Tabata S."/>
        </authorList>
    </citation>
    <scope>NUCLEOTIDE SEQUENCE [LARGE SCALE GENOMIC DNA]</scope>
    <source>
        <strain>PCC 7120 / SAG 25.82 / UTEX 2576</strain>
    </source>
</reference>
<sequence length="362" mass="39499">MYQLNQNQTVNTPQKYRPRLALTVGDPGGIGAEVILKALADLEIGHNYDLTVVSNKNLLQETYKQLSSMENLLPLADPNLLKIIDVTVDRETARQINLGTGNAASGAASFAYMDYAIAQTLAGNFDGIVTGPIAKSAWKAAGYNYPGQTELLAQKSGVERFGMLFVARSPYTGWTLRALLATTHIPLRQVADTLTPQLLTQKLDLLVECLEKDFGITSGRIAIAGLNPHSGEQGQLGTEELDWLIPWLESERQKRPHFQLDGPIPPDTMWVKPGQAWYGNAIVQHPADAYLALYHDQGLIPVKLMAFDRAVNTSIGLPFVRTSPDHGTAFDIAGQGIADATSMKEAISLAAELVCQRLHLEK</sequence>